<evidence type="ECO:0000255" key="1">
    <source>
        <dbReference type="HAMAP-Rule" id="MF_00107"/>
    </source>
</evidence>
<protein>
    <recommendedName>
        <fullName evidence="1">2-C-methyl-D-erythritol 2,4-cyclodiphosphate synthase</fullName>
        <shortName evidence="1">MECDP-synthase</shortName>
        <shortName evidence="1">MECPP-synthase</shortName>
        <shortName evidence="1">MECPS</shortName>
        <ecNumber evidence="1">4.6.1.12</ecNumber>
    </recommendedName>
</protein>
<proteinExistence type="inferred from homology"/>
<dbReference type="EC" id="4.6.1.12" evidence="1"/>
<dbReference type="EMBL" id="CP000853">
    <property type="protein sequence ID" value="ABW18026.1"/>
    <property type="molecule type" value="Genomic_DNA"/>
</dbReference>
<dbReference type="RefSeq" id="WP_012158341.1">
    <property type="nucleotide sequence ID" value="NC_009922.1"/>
</dbReference>
<dbReference type="SMR" id="A8MLB2"/>
<dbReference type="STRING" id="350688.Clos_0464"/>
<dbReference type="KEGG" id="aoe:Clos_0464"/>
<dbReference type="eggNOG" id="COG0245">
    <property type="taxonomic scope" value="Bacteria"/>
</dbReference>
<dbReference type="HOGENOM" id="CLU_084630_2_0_9"/>
<dbReference type="OrthoDB" id="9804336at2"/>
<dbReference type="UniPathway" id="UPA00056">
    <property type="reaction ID" value="UER00095"/>
</dbReference>
<dbReference type="Proteomes" id="UP000000269">
    <property type="component" value="Chromosome"/>
</dbReference>
<dbReference type="GO" id="GO:0008685">
    <property type="term" value="F:2-C-methyl-D-erythritol 2,4-cyclodiphosphate synthase activity"/>
    <property type="evidence" value="ECO:0007669"/>
    <property type="project" value="UniProtKB-UniRule"/>
</dbReference>
<dbReference type="GO" id="GO:0046872">
    <property type="term" value="F:metal ion binding"/>
    <property type="evidence" value="ECO:0007669"/>
    <property type="project" value="UniProtKB-KW"/>
</dbReference>
<dbReference type="GO" id="GO:0019288">
    <property type="term" value="P:isopentenyl diphosphate biosynthetic process, methylerythritol 4-phosphate pathway"/>
    <property type="evidence" value="ECO:0007669"/>
    <property type="project" value="UniProtKB-UniRule"/>
</dbReference>
<dbReference type="GO" id="GO:0016114">
    <property type="term" value="P:terpenoid biosynthetic process"/>
    <property type="evidence" value="ECO:0007669"/>
    <property type="project" value="InterPro"/>
</dbReference>
<dbReference type="CDD" id="cd00554">
    <property type="entry name" value="MECDP_synthase"/>
    <property type="match status" value="1"/>
</dbReference>
<dbReference type="FunFam" id="3.30.1330.50:FF:000001">
    <property type="entry name" value="2-C-methyl-D-erythritol 2,4-cyclodiphosphate synthase"/>
    <property type="match status" value="1"/>
</dbReference>
<dbReference type="Gene3D" id="3.30.1330.50">
    <property type="entry name" value="2-C-methyl-D-erythritol 2,4-cyclodiphosphate synthase"/>
    <property type="match status" value="1"/>
</dbReference>
<dbReference type="HAMAP" id="MF_00107">
    <property type="entry name" value="IspF"/>
    <property type="match status" value="1"/>
</dbReference>
<dbReference type="InterPro" id="IPR003526">
    <property type="entry name" value="MECDP_synthase"/>
</dbReference>
<dbReference type="InterPro" id="IPR020555">
    <property type="entry name" value="MECDP_synthase_CS"/>
</dbReference>
<dbReference type="InterPro" id="IPR036571">
    <property type="entry name" value="MECDP_synthase_sf"/>
</dbReference>
<dbReference type="NCBIfam" id="TIGR00151">
    <property type="entry name" value="ispF"/>
    <property type="match status" value="1"/>
</dbReference>
<dbReference type="PANTHER" id="PTHR43181">
    <property type="entry name" value="2-C-METHYL-D-ERYTHRITOL 2,4-CYCLODIPHOSPHATE SYNTHASE, CHLOROPLASTIC"/>
    <property type="match status" value="1"/>
</dbReference>
<dbReference type="PANTHER" id="PTHR43181:SF1">
    <property type="entry name" value="2-C-METHYL-D-ERYTHRITOL 2,4-CYCLODIPHOSPHATE SYNTHASE, CHLOROPLASTIC"/>
    <property type="match status" value="1"/>
</dbReference>
<dbReference type="Pfam" id="PF02542">
    <property type="entry name" value="YgbB"/>
    <property type="match status" value="1"/>
</dbReference>
<dbReference type="SUPFAM" id="SSF69765">
    <property type="entry name" value="IpsF-like"/>
    <property type="match status" value="1"/>
</dbReference>
<dbReference type="PROSITE" id="PS01350">
    <property type="entry name" value="ISPF"/>
    <property type="match status" value="1"/>
</dbReference>
<gene>
    <name evidence="1" type="primary">ispF</name>
    <name type="ordered locus">Clos_0464</name>
</gene>
<keyword id="KW-0414">Isoprene biosynthesis</keyword>
<keyword id="KW-0456">Lyase</keyword>
<keyword id="KW-0479">Metal-binding</keyword>
<keyword id="KW-1185">Reference proteome</keyword>
<accession>A8MLB2</accession>
<name>ISPF_ALKOO</name>
<organism>
    <name type="scientific">Alkaliphilus oremlandii (strain OhILAs)</name>
    <name type="common">Clostridium oremlandii (strain OhILAs)</name>
    <dbReference type="NCBI Taxonomy" id="350688"/>
    <lineage>
        <taxon>Bacteria</taxon>
        <taxon>Bacillati</taxon>
        <taxon>Bacillota</taxon>
        <taxon>Clostridia</taxon>
        <taxon>Peptostreptococcales</taxon>
        <taxon>Natronincolaceae</taxon>
        <taxon>Alkaliphilus</taxon>
    </lineage>
</organism>
<sequence>MRVGIGYDVHKLVADRKLIIGGVHIPYEKGLLGHSDADVLLHAIKDAILGAAALGDIGKHFPDTDERYKGANSLELLKEVSNLIKSKGYKIHNLDATIIAQKPKMASHIEQMRANIAAAINVDMDSVNVKATTTEGLGFVGVGEGIAANAIASIIKA</sequence>
<comment type="function">
    <text evidence="1">Involved in the biosynthesis of isopentenyl diphosphate (IPP) and dimethylallyl diphosphate (DMAPP), two major building blocks of isoprenoid compounds. Catalyzes the conversion of 4-diphosphocytidyl-2-C-methyl-D-erythritol 2-phosphate (CDP-ME2P) to 2-C-methyl-D-erythritol 2,4-cyclodiphosphate (ME-CPP) with a corresponding release of cytidine 5-monophosphate (CMP).</text>
</comment>
<comment type="catalytic activity">
    <reaction evidence="1">
        <text>4-CDP-2-C-methyl-D-erythritol 2-phosphate = 2-C-methyl-D-erythritol 2,4-cyclic diphosphate + CMP</text>
        <dbReference type="Rhea" id="RHEA:23864"/>
        <dbReference type="ChEBI" id="CHEBI:57919"/>
        <dbReference type="ChEBI" id="CHEBI:58483"/>
        <dbReference type="ChEBI" id="CHEBI:60377"/>
        <dbReference type="EC" id="4.6.1.12"/>
    </reaction>
</comment>
<comment type="cofactor">
    <cofactor evidence="1">
        <name>a divalent metal cation</name>
        <dbReference type="ChEBI" id="CHEBI:60240"/>
    </cofactor>
    <text evidence="1">Binds 1 divalent metal cation per subunit.</text>
</comment>
<comment type="pathway">
    <text evidence="1">Isoprenoid biosynthesis; isopentenyl diphosphate biosynthesis via DXP pathway; isopentenyl diphosphate from 1-deoxy-D-xylulose 5-phosphate: step 4/6.</text>
</comment>
<comment type="subunit">
    <text evidence="1">Homotrimer.</text>
</comment>
<comment type="similarity">
    <text evidence="1">Belongs to the IspF family.</text>
</comment>
<reference key="1">
    <citation type="submission" date="2007-10" db="EMBL/GenBank/DDBJ databases">
        <title>Complete genome of Alkaliphilus oremlandii OhILAs.</title>
        <authorList>
            <person name="Copeland A."/>
            <person name="Lucas S."/>
            <person name="Lapidus A."/>
            <person name="Barry K."/>
            <person name="Detter J.C."/>
            <person name="Glavina del Rio T."/>
            <person name="Hammon N."/>
            <person name="Israni S."/>
            <person name="Dalin E."/>
            <person name="Tice H."/>
            <person name="Pitluck S."/>
            <person name="Chain P."/>
            <person name="Malfatti S."/>
            <person name="Shin M."/>
            <person name="Vergez L."/>
            <person name="Schmutz J."/>
            <person name="Larimer F."/>
            <person name="Land M."/>
            <person name="Hauser L."/>
            <person name="Kyrpides N."/>
            <person name="Mikhailova N."/>
            <person name="Stolz J.F."/>
            <person name="Dawson A."/>
            <person name="Fisher E."/>
            <person name="Crable B."/>
            <person name="Perera E."/>
            <person name="Lisak J."/>
            <person name="Ranganathan M."/>
            <person name="Basu P."/>
            <person name="Richardson P."/>
        </authorList>
    </citation>
    <scope>NUCLEOTIDE SEQUENCE [LARGE SCALE GENOMIC DNA]</scope>
    <source>
        <strain>OhILAs</strain>
    </source>
</reference>
<feature type="chain" id="PRO_1000057706" description="2-C-methyl-D-erythritol 2,4-cyclodiphosphate synthase">
    <location>
        <begin position="1"/>
        <end position="157"/>
    </location>
</feature>
<feature type="binding site" evidence="1">
    <location>
        <begin position="8"/>
        <end position="10"/>
    </location>
    <ligand>
        <name>4-CDP-2-C-methyl-D-erythritol 2-phosphate</name>
        <dbReference type="ChEBI" id="CHEBI:57919"/>
    </ligand>
</feature>
<feature type="binding site" evidence="1">
    <location>
        <position position="8"/>
    </location>
    <ligand>
        <name>a divalent metal cation</name>
        <dbReference type="ChEBI" id="CHEBI:60240"/>
    </ligand>
</feature>
<feature type="binding site" evidence="1">
    <location>
        <position position="10"/>
    </location>
    <ligand>
        <name>a divalent metal cation</name>
        <dbReference type="ChEBI" id="CHEBI:60240"/>
    </ligand>
</feature>
<feature type="binding site" evidence="1">
    <location>
        <begin position="34"/>
        <end position="35"/>
    </location>
    <ligand>
        <name>4-CDP-2-C-methyl-D-erythritol 2-phosphate</name>
        <dbReference type="ChEBI" id="CHEBI:57919"/>
    </ligand>
</feature>
<feature type="binding site" evidence="1">
    <location>
        <position position="42"/>
    </location>
    <ligand>
        <name>a divalent metal cation</name>
        <dbReference type="ChEBI" id="CHEBI:60240"/>
    </ligand>
</feature>
<feature type="binding site" evidence="1">
    <location>
        <begin position="56"/>
        <end position="58"/>
    </location>
    <ligand>
        <name>4-CDP-2-C-methyl-D-erythritol 2-phosphate</name>
        <dbReference type="ChEBI" id="CHEBI:57919"/>
    </ligand>
</feature>
<feature type="binding site" evidence="1">
    <location>
        <begin position="61"/>
        <end position="65"/>
    </location>
    <ligand>
        <name>4-CDP-2-C-methyl-D-erythritol 2-phosphate</name>
        <dbReference type="ChEBI" id="CHEBI:57919"/>
    </ligand>
</feature>
<feature type="binding site" evidence="1">
    <location>
        <begin position="100"/>
        <end position="106"/>
    </location>
    <ligand>
        <name>4-CDP-2-C-methyl-D-erythritol 2-phosphate</name>
        <dbReference type="ChEBI" id="CHEBI:57919"/>
    </ligand>
</feature>
<feature type="binding site" evidence="1">
    <location>
        <begin position="132"/>
        <end position="135"/>
    </location>
    <ligand>
        <name>4-CDP-2-C-methyl-D-erythritol 2-phosphate</name>
        <dbReference type="ChEBI" id="CHEBI:57919"/>
    </ligand>
</feature>
<feature type="binding site" evidence="1">
    <location>
        <position position="139"/>
    </location>
    <ligand>
        <name>4-CDP-2-C-methyl-D-erythritol 2-phosphate</name>
        <dbReference type="ChEBI" id="CHEBI:57919"/>
    </ligand>
</feature>
<feature type="site" description="Transition state stabilizer" evidence="1">
    <location>
        <position position="34"/>
    </location>
</feature>
<feature type="site" description="Transition state stabilizer" evidence="1">
    <location>
        <position position="133"/>
    </location>
</feature>